<feature type="chain" id="PRO_0000187706" description="Peptidyl-tRNA hydrolase">
    <location>
        <begin position="1"/>
        <end position="250"/>
    </location>
</feature>
<feature type="region of interest" description="Disordered" evidence="2">
    <location>
        <begin position="192"/>
        <end position="250"/>
    </location>
</feature>
<feature type="compositionally biased region" description="Polar residues" evidence="2">
    <location>
        <begin position="219"/>
        <end position="229"/>
    </location>
</feature>
<feature type="compositionally biased region" description="Basic and acidic residues" evidence="2">
    <location>
        <begin position="241"/>
        <end position="250"/>
    </location>
</feature>
<feature type="active site" description="Proton acceptor" evidence="1">
    <location>
        <position position="19"/>
    </location>
</feature>
<feature type="binding site" evidence="1">
    <location>
        <position position="14"/>
    </location>
    <ligand>
        <name>tRNA</name>
        <dbReference type="ChEBI" id="CHEBI:17843"/>
    </ligand>
</feature>
<feature type="binding site" evidence="1">
    <location>
        <position position="64"/>
    </location>
    <ligand>
        <name>tRNA</name>
        <dbReference type="ChEBI" id="CHEBI:17843"/>
    </ligand>
</feature>
<feature type="binding site" evidence="1">
    <location>
        <position position="66"/>
    </location>
    <ligand>
        <name>tRNA</name>
        <dbReference type="ChEBI" id="CHEBI:17843"/>
    </ligand>
</feature>
<feature type="binding site" evidence="1">
    <location>
        <position position="112"/>
    </location>
    <ligand>
        <name>tRNA</name>
        <dbReference type="ChEBI" id="CHEBI:17843"/>
    </ligand>
</feature>
<feature type="site" description="Discriminates between blocked and unblocked aminoacyl-tRNA" evidence="1">
    <location>
        <position position="9"/>
    </location>
</feature>
<feature type="site" description="Stabilizes the basic form of H active site to accept a proton" evidence="1">
    <location>
        <position position="91"/>
    </location>
</feature>
<name>PTH_BRUSU</name>
<gene>
    <name evidence="1" type="primary">pth</name>
    <name type="ordered locus">BR1536</name>
    <name type="ordered locus">BS1330_I1530</name>
</gene>
<accession>P65864</accession>
<accession>G0KC20</accession>
<accession>Q8YIG4</accession>
<reference key="1">
    <citation type="journal article" date="2002" name="Proc. Natl. Acad. Sci. U.S.A.">
        <title>The Brucella suis genome reveals fundamental similarities between animal and plant pathogens and symbionts.</title>
        <authorList>
            <person name="Paulsen I.T."/>
            <person name="Seshadri R."/>
            <person name="Nelson K.E."/>
            <person name="Eisen J.A."/>
            <person name="Heidelberg J.F."/>
            <person name="Read T.D."/>
            <person name="Dodson R.J."/>
            <person name="Umayam L.A."/>
            <person name="Brinkac L.M."/>
            <person name="Beanan M.J."/>
            <person name="Daugherty S.C."/>
            <person name="DeBoy R.T."/>
            <person name="Durkin A.S."/>
            <person name="Kolonay J.F."/>
            <person name="Madupu R."/>
            <person name="Nelson W.C."/>
            <person name="Ayodeji B."/>
            <person name="Kraul M."/>
            <person name="Shetty J."/>
            <person name="Malek J.A."/>
            <person name="Van Aken S.E."/>
            <person name="Riedmuller S."/>
            <person name="Tettelin H."/>
            <person name="Gill S.R."/>
            <person name="White O."/>
            <person name="Salzberg S.L."/>
            <person name="Hoover D.L."/>
            <person name="Lindler L.E."/>
            <person name="Halling S.M."/>
            <person name="Boyle S.M."/>
            <person name="Fraser C.M."/>
        </authorList>
    </citation>
    <scope>NUCLEOTIDE SEQUENCE [LARGE SCALE GENOMIC DNA]</scope>
    <source>
        <strain>1330</strain>
    </source>
</reference>
<reference key="2">
    <citation type="journal article" date="2011" name="J. Bacteriol.">
        <title>Revised genome sequence of Brucella suis 1330.</title>
        <authorList>
            <person name="Tae H."/>
            <person name="Shallom S."/>
            <person name="Settlage R."/>
            <person name="Preston D."/>
            <person name="Adams L.G."/>
            <person name="Garner H.R."/>
        </authorList>
    </citation>
    <scope>NUCLEOTIDE SEQUENCE [LARGE SCALE GENOMIC DNA]</scope>
    <source>
        <strain>1330</strain>
    </source>
</reference>
<organism>
    <name type="scientific">Brucella suis biovar 1 (strain 1330)</name>
    <dbReference type="NCBI Taxonomy" id="204722"/>
    <lineage>
        <taxon>Bacteria</taxon>
        <taxon>Pseudomonadati</taxon>
        <taxon>Pseudomonadota</taxon>
        <taxon>Alphaproteobacteria</taxon>
        <taxon>Hyphomicrobiales</taxon>
        <taxon>Brucellaceae</taxon>
        <taxon>Brucella/Ochrobactrum group</taxon>
        <taxon>Brucella</taxon>
    </lineage>
</organism>
<sequence>MLLIAGLGNPGPQYAHNRHNIGFMAADEIFRRHRFSNWQKKFQAEIADGVIDGEKVLLVKPQTFMNLSGQSIGEAMRFYKLTPADLVVIYDELDLVPGKLRIKTGGGSGGHNGIKSIDAHMQSFPGGQNYRRMRLGIGHPGAKELVHNYVLGDFAKADNEWLDTLMGAVADNVAMLARREDNSFMNRIALAMGDGNQRPGGVKTDPAQLEKAPPKAQSHIRQARQNQKKPNIPESGPMAEMLKKLLGKKD</sequence>
<protein>
    <recommendedName>
        <fullName evidence="1">Peptidyl-tRNA hydrolase</fullName>
        <shortName evidence="1">Pth</shortName>
        <ecNumber evidence="1">3.1.1.29</ecNumber>
    </recommendedName>
</protein>
<evidence type="ECO:0000255" key="1">
    <source>
        <dbReference type="HAMAP-Rule" id="MF_00083"/>
    </source>
</evidence>
<evidence type="ECO:0000256" key="2">
    <source>
        <dbReference type="SAM" id="MobiDB-lite"/>
    </source>
</evidence>
<dbReference type="EC" id="3.1.1.29" evidence="1"/>
<dbReference type="EMBL" id="AE014291">
    <property type="protein sequence ID" value="AAN30446.1"/>
    <property type="molecule type" value="Genomic_DNA"/>
</dbReference>
<dbReference type="EMBL" id="CP002997">
    <property type="protein sequence ID" value="AEM18862.1"/>
    <property type="molecule type" value="Genomic_DNA"/>
</dbReference>
<dbReference type="RefSeq" id="WP_002967832.1">
    <property type="nucleotide sequence ID" value="NZ_KN046804.1"/>
</dbReference>
<dbReference type="SMR" id="P65864"/>
<dbReference type="GeneID" id="97533278"/>
<dbReference type="KEGG" id="bms:BR1536"/>
<dbReference type="KEGG" id="bsi:BS1330_I1530"/>
<dbReference type="PATRIC" id="fig|204722.21.peg.1825"/>
<dbReference type="HOGENOM" id="CLU_062456_1_1_5"/>
<dbReference type="PhylomeDB" id="P65864"/>
<dbReference type="PRO" id="PR:P65864"/>
<dbReference type="Proteomes" id="UP000007104">
    <property type="component" value="Chromosome I"/>
</dbReference>
<dbReference type="GO" id="GO:0005737">
    <property type="term" value="C:cytoplasm"/>
    <property type="evidence" value="ECO:0007669"/>
    <property type="project" value="UniProtKB-SubCell"/>
</dbReference>
<dbReference type="GO" id="GO:0004045">
    <property type="term" value="F:peptidyl-tRNA hydrolase activity"/>
    <property type="evidence" value="ECO:0007669"/>
    <property type="project" value="UniProtKB-UniRule"/>
</dbReference>
<dbReference type="GO" id="GO:0000049">
    <property type="term" value="F:tRNA binding"/>
    <property type="evidence" value="ECO:0007669"/>
    <property type="project" value="UniProtKB-UniRule"/>
</dbReference>
<dbReference type="GO" id="GO:0006515">
    <property type="term" value="P:protein quality control for misfolded or incompletely synthesized proteins"/>
    <property type="evidence" value="ECO:0007669"/>
    <property type="project" value="UniProtKB-UniRule"/>
</dbReference>
<dbReference type="GO" id="GO:0072344">
    <property type="term" value="P:rescue of stalled ribosome"/>
    <property type="evidence" value="ECO:0007669"/>
    <property type="project" value="UniProtKB-UniRule"/>
</dbReference>
<dbReference type="CDD" id="cd00462">
    <property type="entry name" value="PTH"/>
    <property type="match status" value="1"/>
</dbReference>
<dbReference type="FunFam" id="3.40.50.1470:FF:000001">
    <property type="entry name" value="Peptidyl-tRNA hydrolase"/>
    <property type="match status" value="1"/>
</dbReference>
<dbReference type="Gene3D" id="3.40.50.1470">
    <property type="entry name" value="Peptidyl-tRNA hydrolase"/>
    <property type="match status" value="1"/>
</dbReference>
<dbReference type="HAMAP" id="MF_00083">
    <property type="entry name" value="Pept_tRNA_hydro_bact"/>
    <property type="match status" value="1"/>
</dbReference>
<dbReference type="InterPro" id="IPR001328">
    <property type="entry name" value="Pept_tRNA_hydro"/>
</dbReference>
<dbReference type="InterPro" id="IPR018171">
    <property type="entry name" value="Pept_tRNA_hydro_CS"/>
</dbReference>
<dbReference type="InterPro" id="IPR036416">
    <property type="entry name" value="Pept_tRNA_hydro_sf"/>
</dbReference>
<dbReference type="NCBIfam" id="TIGR00447">
    <property type="entry name" value="pth"/>
    <property type="match status" value="1"/>
</dbReference>
<dbReference type="PANTHER" id="PTHR17224">
    <property type="entry name" value="PEPTIDYL-TRNA HYDROLASE"/>
    <property type="match status" value="1"/>
</dbReference>
<dbReference type="PANTHER" id="PTHR17224:SF1">
    <property type="entry name" value="PEPTIDYL-TRNA HYDROLASE"/>
    <property type="match status" value="1"/>
</dbReference>
<dbReference type="Pfam" id="PF01195">
    <property type="entry name" value="Pept_tRNA_hydro"/>
    <property type="match status" value="1"/>
</dbReference>
<dbReference type="SUPFAM" id="SSF53178">
    <property type="entry name" value="Peptidyl-tRNA hydrolase-like"/>
    <property type="match status" value="1"/>
</dbReference>
<dbReference type="PROSITE" id="PS01195">
    <property type="entry name" value="PEPT_TRNA_HYDROL_1"/>
    <property type="match status" value="1"/>
</dbReference>
<dbReference type="PROSITE" id="PS01196">
    <property type="entry name" value="PEPT_TRNA_HYDROL_2"/>
    <property type="match status" value="1"/>
</dbReference>
<comment type="function">
    <text evidence="1">Hydrolyzes ribosome-free peptidyl-tRNAs (with 1 or more amino acids incorporated), which drop off the ribosome during protein synthesis, or as a result of ribosome stalling.</text>
</comment>
<comment type="function">
    <text evidence="1">Catalyzes the release of premature peptidyl moieties from peptidyl-tRNA molecules trapped in stalled 50S ribosomal subunits, and thus maintains levels of free tRNAs and 50S ribosomes.</text>
</comment>
<comment type="catalytic activity">
    <reaction evidence="1">
        <text>an N-acyl-L-alpha-aminoacyl-tRNA + H2O = an N-acyl-L-amino acid + a tRNA + H(+)</text>
        <dbReference type="Rhea" id="RHEA:54448"/>
        <dbReference type="Rhea" id="RHEA-COMP:10123"/>
        <dbReference type="Rhea" id="RHEA-COMP:13883"/>
        <dbReference type="ChEBI" id="CHEBI:15377"/>
        <dbReference type="ChEBI" id="CHEBI:15378"/>
        <dbReference type="ChEBI" id="CHEBI:59874"/>
        <dbReference type="ChEBI" id="CHEBI:78442"/>
        <dbReference type="ChEBI" id="CHEBI:138191"/>
        <dbReference type="EC" id="3.1.1.29"/>
    </reaction>
</comment>
<comment type="subunit">
    <text evidence="1">Monomer.</text>
</comment>
<comment type="subcellular location">
    <subcellularLocation>
        <location evidence="1">Cytoplasm</location>
    </subcellularLocation>
</comment>
<comment type="similarity">
    <text evidence="1">Belongs to the PTH family.</text>
</comment>
<keyword id="KW-0963">Cytoplasm</keyword>
<keyword id="KW-0378">Hydrolase</keyword>
<keyword id="KW-0694">RNA-binding</keyword>
<keyword id="KW-0820">tRNA-binding</keyword>
<proteinExistence type="inferred from homology"/>